<name>TMCAL_ANOFW</name>
<protein>
    <recommendedName>
        <fullName evidence="1">tRNA(Met) cytidine acetate ligase</fullName>
        <ecNumber evidence="1">6.3.4.-</ecNumber>
    </recommendedName>
</protein>
<evidence type="ECO:0000255" key="1">
    <source>
        <dbReference type="HAMAP-Rule" id="MF_01539"/>
    </source>
</evidence>
<gene>
    <name evidence="1" type="primary">tmcAL</name>
    <name type="ordered locus">Aflv_1846</name>
</gene>
<keyword id="KW-0067">ATP-binding</keyword>
<keyword id="KW-0963">Cytoplasm</keyword>
<keyword id="KW-0436">Ligase</keyword>
<keyword id="KW-0547">Nucleotide-binding</keyword>
<keyword id="KW-0694">RNA-binding</keyword>
<keyword id="KW-0819">tRNA processing</keyword>
<keyword id="KW-0820">tRNA-binding</keyword>
<feature type="chain" id="PRO_1000198849" description="tRNA(Met) cytidine acetate ligase">
    <location>
        <begin position="1"/>
        <end position="401"/>
    </location>
</feature>
<feature type="binding site" evidence="1">
    <location>
        <begin position="7"/>
        <end position="20"/>
    </location>
    <ligand>
        <name>ATP</name>
        <dbReference type="ChEBI" id="CHEBI:30616"/>
    </ligand>
</feature>
<feature type="binding site" evidence="1">
    <location>
        <position position="101"/>
    </location>
    <ligand>
        <name>ATP</name>
        <dbReference type="ChEBI" id="CHEBI:30616"/>
    </ligand>
</feature>
<feature type="binding site" evidence="1">
    <location>
        <position position="160"/>
    </location>
    <ligand>
        <name>ATP</name>
        <dbReference type="ChEBI" id="CHEBI:30616"/>
    </ligand>
</feature>
<feature type="binding site" evidence="1">
    <location>
        <begin position="185"/>
        <end position="186"/>
    </location>
    <ligand>
        <name>ATP</name>
        <dbReference type="ChEBI" id="CHEBI:30616"/>
    </ligand>
</feature>
<dbReference type="EC" id="6.3.4.-" evidence="1"/>
<dbReference type="EMBL" id="CP000922">
    <property type="protein sequence ID" value="ACJ34207.1"/>
    <property type="molecule type" value="Genomic_DNA"/>
</dbReference>
<dbReference type="RefSeq" id="WP_012575404.1">
    <property type="nucleotide sequence ID" value="NC_011567.1"/>
</dbReference>
<dbReference type="SMR" id="B7GGJ8"/>
<dbReference type="STRING" id="491915.Aflv_1846"/>
<dbReference type="GeneID" id="7038099"/>
<dbReference type="KEGG" id="afl:Aflv_1846"/>
<dbReference type="PATRIC" id="fig|491915.6.peg.1898"/>
<dbReference type="eggNOG" id="COG1323">
    <property type="taxonomic scope" value="Bacteria"/>
</dbReference>
<dbReference type="HOGENOM" id="CLU_038915_0_2_9"/>
<dbReference type="Proteomes" id="UP000000742">
    <property type="component" value="Chromosome"/>
</dbReference>
<dbReference type="GO" id="GO:0005737">
    <property type="term" value="C:cytoplasm"/>
    <property type="evidence" value="ECO:0007669"/>
    <property type="project" value="UniProtKB-SubCell"/>
</dbReference>
<dbReference type="GO" id="GO:0005524">
    <property type="term" value="F:ATP binding"/>
    <property type="evidence" value="ECO:0007669"/>
    <property type="project" value="UniProtKB-KW"/>
</dbReference>
<dbReference type="GO" id="GO:0016879">
    <property type="term" value="F:ligase activity, forming carbon-nitrogen bonds"/>
    <property type="evidence" value="ECO:0007669"/>
    <property type="project" value="UniProtKB-UniRule"/>
</dbReference>
<dbReference type="GO" id="GO:0000049">
    <property type="term" value="F:tRNA binding"/>
    <property type="evidence" value="ECO:0007669"/>
    <property type="project" value="UniProtKB-KW"/>
</dbReference>
<dbReference type="GO" id="GO:0006400">
    <property type="term" value="P:tRNA modification"/>
    <property type="evidence" value="ECO:0007669"/>
    <property type="project" value="UniProtKB-UniRule"/>
</dbReference>
<dbReference type="Gene3D" id="3.40.50.620">
    <property type="entry name" value="HUPs"/>
    <property type="match status" value="1"/>
</dbReference>
<dbReference type="HAMAP" id="MF_01539">
    <property type="entry name" value="TmcAL"/>
    <property type="match status" value="1"/>
</dbReference>
<dbReference type="InterPro" id="IPR014729">
    <property type="entry name" value="Rossmann-like_a/b/a_fold"/>
</dbReference>
<dbReference type="InterPro" id="IPR008513">
    <property type="entry name" value="tRNA(Met)_cyd_acetate_ligase"/>
</dbReference>
<dbReference type="NCBIfam" id="NF010191">
    <property type="entry name" value="PRK13670.1"/>
    <property type="match status" value="1"/>
</dbReference>
<dbReference type="NCBIfam" id="NF010192">
    <property type="entry name" value="PRK13671.1"/>
    <property type="match status" value="1"/>
</dbReference>
<dbReference type="PANTHER" id="PTHR37825">
    <property type="entry name" value="TRNA(MET) CYTIDINE ACETATE LIGASE"/>
    <property type="match status" value="1"/>
</dbReference>
<dbReference type="PANTHER" id="PTHR37825:SF1">
    <property type="entry name" value="TRNA(MET) CYTIDINE ACETATE LIGASE"/>
    <property type="match status" value="1"/>
</dbReference>
<dbReference type="Pfam" id="PF05636">
    <property type="entry name" value="HIGH_NTase1"/>
    <property type="match status" value="1"/>
</dbReference>
<dbReference type="SUPFAM" id="SSF52374">
    <property type="entry name" value="Nucleotidylyl transferase"/>
    <property type="match status" value="1"/>
</dbReference>
<accession>B7GGJ8</accession>
<proteinExistence type="inferred from homology"/>
<organism>
    <name type="scientific">Anoxybacillus flavithermus (strain DSM 21510 / WK1)</name>
    <dbReference type="NCBI Taxonomy" id="491915"/>
    <lineage>
        <taxon>Bacteria</taxon>
        <taxon>Bacillati</taxon>
        <taxon>Bacillota</taxon>
        <taxon>Bacilli</taxon>
        <taxon>Bacillales</taxon>
        <taxon>Anoxybacillaceae</taxon>
        <taxon>Anoxybacillus</taxon>
    </lineage>
</organism>
<reference key="1">
    <citation type="journal article" date="2008" name="Genome Biol.">
        <title>Encapsulated in silica: genome, proteome and physiology of the thermophilic bacterium Anoxybacillus flavithermus WK1.</title>
        <authorList>
            <person name="Saw J.H."/>
            <person name="Mountain B.W."/>
            <person name="Feng L."/>
            <person name="Omelchenko M.V."/>
            <person name="Hou S."/>
            <person name="Saito J.A."/>
            <person name="Stott M.B."/>
            <person name="Li D."/>
            <person name="Zhao G."/>
            <person name="Wu J."/>
            <person name="Galperin M.Y."/>
            <person name="Koonin E.V."/>
            <person name="Makarova K.S."/>
            <person name="Wolf Y.I."/>
            <person name="Rigden D.J."/>
            <person name="Dunfield P.F."/>
            <person name="Wang L."/>
            <person name="Alam M."/>
        </authorList>
    </citation>
    <scope>NUCLEOTIDE SEQUENCE [LARGE SCALE GENOMIC DNA]</scope>
    <source>
        <strain>DSM 21510 / WK1</strain>
    </source>
</reference>
<comment type="function">
    <text evidence="1">Catalyzes the formation of N(4)-acetylcytidine (ac(4)C) at the wobble position of elongator tRNA(Met), using acetate and ATP as substrates. First activates an acetate ion to form acetyladenylate (Ac-AMP) and then transfers the acetyl group to tRNA to form ac(4)C34.</text>
</comment>
<comment type="catalytic activity">
    <reaction evidence="1">
        <text>cytidine(34) in elongator tRNA(Met) + acetate + ATP = N(4)-acetylcytidine(34) in elongator tRNA(Met) + AMP + diphosphate</text>
        <dbReference type="Rhea" id="RHEA:58144"/>
        <dbReference type="Rhea" id="RHEA-COMP:10693"/>
        <dbReference type="Rhea" id="RHEA-COMP:10694"/>
        <dbReference type="ChEBI" id="CHEBI:30089"/>
        <dbReference type="ChEBI" id="CHEBI:30616"/>
        <dbReference type="ChEBI" id="CHEBI:33019"/>
        <dbReference type="ChEBI" id="CHEBI:74900"/>
        <dbReference type="ChEBI" id="CHEBI:82748"/>
        <dbReference type="ChEBI" id="CHEBI:456215"/>
    </reaction>
</comment>
<comment type="subcellular location">
    <subcellularLocation>
        <location evidence="1">Cytoplasm</location>
    </subcellularLocation>
</comment>
<comment type="similarity">
    <text evidence="1">Belongs to the TmcAL family.</text>
</comment>
<sequence>MKAVGIVVEYNPFHNGHLYHVQQTRKKTSADCVIAVMSSSFTQRGEPAIVPKWERARMALAGGVDLVVELPYPFAVQTAEWFAQGAVSILDALFCEQLCFGSEHGSIEPFIKTAQLLVYKKEQHNEKVKQYVRQGINYAKAYALALYDIGHDTLDVSQPNNILGLHYVKAIIEQRSNIKPETIQRIVAHYHDETLPVNDNIASATSIRRFLQVSDDDVARYVPHTTYETLQTYRHTYMTWHDWEKYFPFLKYRLLTMEVDDIQQIAEVEEGIEYRLKKAIIHATSFHDFLSAVKTKRYTWTRLQRICTHILTNVTKKEIAKAIESKRATYVRPLAMNETGRAYLQEVKKHMTLPLVTNAKHMRHDPIYQIEKKATQAYVSILPEPLCSEALQREYKTPPLR</sequence>